<evidence type="ECO:0000250" key="1"/>
<evidence type="ECO:0000255" key="2"/>
<evidence type="ECO:0000305" key="3"/>
<accession>P08087</accession>
<protein>
    <recommendedName>
        <fullName>Benzene 1,2-dioxygenase system ferredoxin--NAD(+) reductase component</fullName>
        <ecNumber>1.18.1.3</ecNumber>
    </recommendedName>
    <alternativeName>
        <fullName>P4 subunit</fullName>
    </alternativeName>
</protein>
<comment type="function">
    <text>Part of the electron transfer component of benzene 1,2-dioxygenase, transfers electrons from ferredoxin (BnzC) to NADH.</text>
</comment>
<comment type="catalytic activity">
    <reaction>
        <text>2 reduced [2Fe-2S]-[ferredoxin] + NAD(+) + H(+) = 2 oxidized [2Fe-2S]-[ferredoxin] + NADH</text>
        <dbReference type="Rhea" id="RHEA:16521"/>
        <dbReference type="Rhea" id="RHEA-COMP:10000"/>
        <dbReference type="Rhea" id="RHEA-COMP:10001"/>
        <dbReference type="ChEBI" id="CHEBI:15378"/>
        <dbReference type="ChEBI" id="CHEBI:33737"/>
        <dbReference type="ChEBI" id="CHEBI:33738"/>
        <dbReference type="ChEBI" id="CHEBI:57540"/>
        <dbReference type="ChEBI" id="CHEBI:57945"/>
        <dbReference type="EC" id="1.18.1.3"/>
    </reaction>
</comment>
<comment type="cofactor">
    <cofactor>
        <name>FAD</name>
        <dbReference type="ChEBI" id="CHEBI:57692"/>
    </cofactor>
</comment>
<comment type="pathway">
    <text>Aromatic compound metabolism; benzene degradation; catechol from benzene: step 1/2.</text>
</comment>
<comment type="subunit">
    <text>This dioxygenase system consists of four proteins: the two subunits of the hydroxylase component (BnzA and BnzB), a ferredoxin (BnzC) and a ferredoxin reductase (BnzD).</text>
</comment>
<comment type="similarity">
    <text evidence="3">Belongs to the bacterial ring-hydroxylating dioxygenase ferredoxin reductase family.</text>
</comment>
<keyword id="KW-0058">Aromatic hydrocarbons catabolism</keyword>
<keyword id="KW-0274">FAD</keyword>
<keyword id="KW-0285">Flavoprotein</keyword>
<keyword id="KW-0520">NAD</keyword>
<keyword id="KW-0560">Oxidoreductase</keyword>
<name>BNZD_PSEPU</name>
<proteinExistence type="inferred from homology"/>
<feature type="initiator methionine" description="Removed" evidence="1">
    <location>
        <position position="1"/>
    </location>
</feature>
<feature type="chain" id="PRO_0000167651" description="Benzene 1,2-dioxygenase system ferredoxin--NAD(+) reductase component">
    <location>
        <begin position="2"/>
        <end position="409"/>
    </location>
</feature>
<feature type="binding site" evidence="2">
    <location>
        <begin position="4"/>
        <end position="35"/>
    </location>
    <ligand>
        <name>FAD</name>
        <dbReference type="ChEBI" id="CHEBI:57692"/>
    </ligand>
</feature>
<feature type="binding site" evidence="2">
    <location>
        <begin position="145"/>
        <end position="173"/>
    </location>
    <ligand>
        <name>NAD(+)</name>
        <dbReference type="ChEBI" id="CHEBI:57540"/>
    </ligand>
</feature>
<gene>
    <name type="primary">bnzD</name>
</gene>
<reference key="1">
    <citation type="journal article" date="1987" name="J. Bacteriol.">
        <title>Nucleotide sequencing and characterization of the genes encoding benzene oxidation enzymes of Pseudomonas putida.</title>
        <authorList>
            <person name="Irie S."/>
            <person name="Doi S."/>
            <person name="Yorifuji T."/>
            <person name="Takagi M."/>
            <person name="Yano K."/>
        </authorList>
    </citation>
    <scope>NUCLEOTIDE SEQUENCE [GENOMIC DNA]</scope>
    <source>
        <strain>BE-81</strain>
    </source>
</reference>
<organism>
    <name type="scientific">Pseudomonas putida</name>
    <name type="common">Arthrobacter siderocapsulatus</name>
    <dbReference type="NCBI Taxonomy" id="303"/>
    <lineage>
        <taxon>Bacteria</taxon>
        <taxon>Pseudomonadati</taxon>
        <taxon>Pseudomonadota</taxon>
        <taxon>Gammaproteobacteria</taxon>
        <taxon>Pseudomonadales</taxon>
        <taxon>Pseudomonadaceae</taxon>
        <taxon>Pseudomonas</taxon>
    </lineage>
</organism>
<dbReference type="EC" id="1.18.1.3"/>
<dbReference type="EMBL" id="M17904">
    <property type="protein sequence ID" value="AAA25738.1"/>
    <property type="molecule type" value="Genomic_DNA"/>
</dbReference>
<dbReference type="SMR" id="P08087"/>
<dbReference type="UniPathway" id="UPA00272">
    <property type="reaction ID" value="UER00391"/>
</dbReference>
<dbReference type="GO" id="GO:0005737">
    <property type="term" value="C:cytoplasm"/>
    <property type="evidence" value="ECO:0007669"/>
    <property type="project" value="TreeGrafter"/>
</dbReference>
<dbReference type="GO" id="GO:0008860">
    <property type="term" value="F:ferredoxin-NAD+ reductase activity"/>
    <property type="evidence" value="ECO:0007669"/>
    <property type="project" value="UniProtKB-EC"/>
</dbReference>
<dbReference type="GO" id="GO:0016651">
    <property type="term" value="F:oxidoreductase activity, acting on NAD(P)H"/>
    <property type="evidence" value="ECO:0007669"/>
    <property type="project" value="TreeGrafter"/>
</dbReference>
<dbReference type="GO" id="GO:0009056">
    <property type="term" value="P:catabolic process"/>
    <property type="evidence" value="ECO:0007669"/>
    <property type="project" value="UniProtKB-KW"/>
</dbReference>
<dbReference type="Gene3D" id="3.30.390.30">
    <property type="match status" value="1"/>
</dbReference>
<dbReference type="Gene3D" id="3.50.50.60">
    <property type="entry name" value="FAD/NAD(P)-binding domain"/>
    <property type="match status" value="2"/>
</dbReference>
<dbReference type="InterPro" id="IPR050446">
    <property type="entry name" value="FAD-oxidoreductase/Apoptosis"/>
</dbReference>
<dbReference type="InterPro" id="IPR036188">
    <property type="entry name" value="FAD/NAD-bd_sf"/>
</dbReference>
<dbReference type="InterPro" id="IPR023753">
    <property type="entry name" value="FAD/NAD-binding_dom"/>
</dbReference>
<dbReference type="InterPro" id="IPR016156">
    <property type="entry name" value="FAD/NAD-linked_Rdtase_dimer_sf"/>
</dbReference>
<dbReference type="InterPro" id="IPR028202">
    <property type="entry name" value="Reductase_C"/>
</dbReference>
<dbReference type="PANTHER" id="PTHR43557">
    <property type="entry name" value="APOPTOSIS-INDUCING FACTOR 1"/>
    <property type="match status" value="1"/>
</dbReference>
<dbReference type="PANTHER" id="PTHR43557:SF2">
    <property type="entry name" value="RIESKE DOMAIN-CONTAINING PROTEIN-RELATED"/>
    <property type="match status" value="1"/>
</dbReference>
<dbReference type="Pfam" id="PF07992">
    <property type="entry name" value="Pyr_redox_2"/>
    <property type="match status" value="1"/>
</dbReference>
<dbReference type="Pfam" id="PF14759">
    <property type="entry name" value="Reductase_C"/>
    <property type="match status" value="1"/>
</dbReference>
<dbReference type="PRINTS" id="PR00368">
    <property type="entry name" value="FADPNR"/>
</dbReference>
<dbReference type="PRINTS" id="PR00411">
    <property type="entry name" value="PNDRDTASEI"/>
</dbReference>
<dbReference type="SUPFAM" id="SSF51905">
    <property type="entry name" value="FAD/NAD(P)-binding domain"/>
    <property type="match status" value="2"/>
</dbReference>
<dbReference type="SUPFAM" id="SSF55424">
    <property type="entry name" value="FAD/NAD-linked reductases, dimerisation (C-terminal) domain"/>
    <property type="match status" value="1"/>
</dbReference>
<sequence>MATHVAIIGNGVGGFTTAQALRAEGFEGRISLIGDEPHLPYDRPSLSKAVLDGSLERPPILAEADWYGEARIDMLTGPEVTALDVQTRTISLDDGTTLSADAIVIATGSRARTMALPGSQLPGVVTLRTYGDVQVLRDSWTSATRLLIVGGGLIGCEVATTARKLGLSVTILEAGDELLVRVLGRRIGAWLRGLLTELGVQVELGTGVVGFSGEGQLEQVMASDGRSFVADSALICVGAEPADQLARQAGLACDRGVIVDHCGATLAKGYSPSEMWPVGAAAGGRRSLETYMNAQRQAAAVAAAILGKNVSAPQLPVSWTEIAGHRMQMAGDIEGPGDFVSRGMPGSGAALLFRLQERRIQAVVAVDAPRDFALATRLVEARAAIEPARLADLSNSMRDFVRANEGDLT</sequence>